<sequence length="166" mass="19268">MAAATFWFVLRGWRTGVPPGCGLRRLSQTQGTPDYPRFLESVDEYRFVERLLPPTSIPKPPKHEHYPTPCGWQPPRDPPPNLPYFVRRSRMHNIPVYRDITHGNRQMTVIRKVEGDIWALQKDVEDFLSPLLGKTPITQVNEVTGTLRIKGYFDQQLKAWLLEKGF</sequence>
<gene>
    <name type="primary">MRPL49</name>
</gene>
<dbReference type="EMBL" id="BT020698">
    <property type="protein sequence ID" value="AAX08715.1"/>
    <property type="molecule type" value="mRNA"/>
</dbReference>
<dbReference type="EMBL" id="BC120239">
    <property type="protein sequence ID" value="AAI20240.1"/>
    <property type="molecule type" value="mRNA"/>
</dbReference>
<dbReference type="RefSeq" id="NP_001014871.1">
    <property type="nucleotide sequence ID" value="NM_001014871.1"/>
</dbReference>
<dbReference type="RefSeq" id="XP_005227088.1">
    <property type="nucleotide sequence ID" value="XM_005227031.1"/>
</dbReference>
<dbReference type="SMR" id="Q5EA71"/>
<dbReference type="FunCoup" id="Q5EA71">
    <property type="interactions" value="2908"/>
</dbReference>
<dbReference type="STRING" id="9913.ENSBTAP00000006689"/>
<dbReference type="iPTMnet" id="Q5EA71"/>
<dbReference type="PaxDb" id="9913-ENSBTAP00000006689"/>
<dbReference type="GeneID" id="508359"/>
<dbReference type="KEGG" id="bta:508359"/>
<dbReference type="CTD" id="740"/>
<dbReference type="eggNOG" id="KOG4034">
    <property type="taxonomic scope" value="Eukaryota"/>
</dbReference>
<dbReference type="InParanoid" id="Q5EA71"/>
<dbReference type="OrthoDB" id="19439at2759"/>
<dbReference type="Proteomes" id="UP000009136">
    <property type="component" value="Unplaced"/>
</dbReference>
<dbReference type="GO" id="GO:0005743">
    <property type="term" value="C:mitochondrial inner membrane"/>
    <property type="evidence" value="ECO:0000304"/>
    <property type="project" value="Reactome"/>
</dbReference>
<dbReference type="GO" id="GO:0005762">
    <property type="term" value="C:mitochondrial large ribosomal subunit"/>
    <property type="evidence" value="ECO:0000250"/>
    <property type="project" value="UniProtKB"/>
</dbReference>
<dbReference type="GO" id="GO:0005761">
    <property type="term" value="C:mitochondrial ribosome"/>
    <property type="evidence" value="ECO:0000250"/>
    <property type="project" value="UniProtKB"/>
</dbReference>
<dbReference type="GO" id="GO:0003735">
    <property type="term" value="F:structural constituent of ribosome"/>
    <property type="evidence" value="ECO:0000318"/>
    <property type="project" value="GO_Central"/>
</dbReference>
<dbReference type="GO" id="GO:0006412">
    <property type="term" value="P:translation"/>
    <property type="evidence" value="ECO:0007669"/>
    <property type="project" value="InterPro"/>
</dbReference>
<dbReference type="FunFam" id="3.30.780.10:FF:000009">
    <property type="entry name" value="39S ribosomal protein L49, mitochondrial"/>
    <property type="match status" value="1"/>
</dbReference>
<dbReference type="Gene3D" id="3.30.780.10">
    <property type="entry name" value="SUI1-like domain"/>
    <property type="match status" value="1"/>
</dbReference>
<dbReference type="InterPro" id="IPR007740">
    <property type="entry name" value="Ribosomal_mL49"/>
</dbReference>
<dbReference type="PANTHER" id="PTHR13477:SF0">
    <property type="entry name" value="LARGE RIBOSOMAL SUBUNIT PROTEIN ML49"/>
    <property type="match status" value="1"/>
</dbReference>
<dbReference type="PANTHER" id="PTHR13477">
    <property type="entry name" value="MITOCHONDRIAL 39S RIBOSOMAL PROTEIN L49"/>
    <property type="match status" value="1"/>
</dbReference>
<dbReference type="Pfam" id="PF05046">
    <property type="entry name" value="Img2"/>
    <property type="match status" value="1"/>
</dbReference>
<accession>Q5EA71</accession>
<accession>Q0P5C6</accession>
<evidence type="ECO:0000250" key="1">
    <source>
        <dbReference type="UniProtKB" id="Q13405"/>
    </source>
</evidence>
<evidence type="ECO:0000269" key="2">
    <source>
    </source>
</evidence>
<evidence type="ECO:0000305" key="3"/>
<protein>
    <recommendedName>
        <fullName evidence="3">Large ribosomal subunit protein mL49</fullName>
    </recommendedName>
    <alternativeName>
        <fullName>39S ribosomal protein L49, mitochondrial</fullName>
        <shortName>L49mt</shortName>
        <shortName>MRP-L49</shortName>
    </alternativeName>
</protein>
<reference key="1">
    <citation type="journal article" date="2005" name="BMC Genomics">
        <title>Characterization of 954 bovine full-CDS cDNA sequences.</title>
        <authorList>
            <person name="Harhay G.P."/>
            <person name="Sonstegard T.S."/>
            <person name="Keele J.W."/>
            <person name="Heaton M.P."/>
            <person name="Clawson M.L."/>
            <person name="Snelling W.M."/>
            <person name="Wiedmann R.T."/>
            <person name="Van Tassell C.P."/>
            <person name="Smith T.P.L."/>
        </authorList>
    </citation>
    <scope>NUCLEOTIDE SEQUENCE [LARGE SCALE MRNA]</scope>
</reference>
<reference key="2">
    <citation type="submission" date="2006-08" db="EMBL/GenBank/DDBJ databases">
        <authorList>
            <consortium name="NIH - Mammalian Gene Collection (MGC) project"/>
        </authorList>
    </citation>
    <scope>NUCLEOTIDE SEQUENCE [LARGE SCALE MRNA]</scope>
    <source>
        <strain>Hereford</strain>
        <tissue>Fetal cerebellum</tissue>
    </source>
</reference>
<reference key="3">
    <citation type="journal article" date="2010" name="J. Biol. Chem.">
        <title>Properties of the C-terminal tail of human mitochondrial inner membrane protein Oxa1L and its interactions with mammalian mitochondrial ribosomes.</title>
        <authorList>
            <person name="Haque M.E."/>
            <person name="Elmore K.B."/>
            <person name="Tripathy A."/>
            <person name="Koc H."/>
            <person name="Koc E.C."/>
            <person name="Spremulli L.L."/>
        </authorList>
    </citation>
    <scope>INTERACTION WITH OXA1L</scope>
    <scope>IDENTIFICATION BY MASS SPECTROMETRY</scope>
</reference>
<proteinExistence type="evidence at protein level"/>
<name>RM49_BOVIN</name>
<feature type="chain" id="PRO_0000207663" description="Large ribosomal subunit protein mL49">
    <location>
        <begin position="1"/>
        <end position="166"/>
    </location>
</feature>
<feature type="sequence conflict" description="In Ref. 2; AAI20240." evidence="3" ref="2">
    <original>W</original>
    <variation>R</variation>
    <location>
        <position position="7"/>
    </location>
</feature>
<feature type="sequence conflict" description="In Ref. 2; AAI20240." evidence="3" ref="2">
    <location>
        <begin position="27"/>
        <end position="28"/>
    </location>
</feature>
<feature type="sequence conflict" description="In Ref. 2; AAI20240." evidence="3" ref="2">
    <original>Q</original>
    <variation>H</variation>
    <location>
        <position position="155"/>
    </location>
</feature>
<keyword id="KW-0496">Mitochondrion</keyword>
<keyword id="KW-1185">Reference proteome</keyword>
<keyword id="KW-0687">Ribonucleoprotein</keyword>
<keyword id="KW-0689">Ribosomal protein</keyword>
<comment type="subunit">
    <text evidence="1 2">Component of the mitochondrial ribosome large subunit (39S) which comprises a 16S rRNA and about 50 distinct proteins (By similarity). Interacts with OXA1L (PubMed:20601428).</text>
</comment>
<comment type="subcellular location">
    <subcellularLocation>
        <location evidence="1">Mitochondrion</location>
    </subcellularLocation>
</comment>
<comment type="similarity">
    <text evidence="3">Belongs to the mitochondrion-specific ribosomal protein mL49 family.</text>
</comment>
<organism>
    <name type="scientific">Bos taurus</name>
    <name type="common">Bovine</name>
    <dbReference type="NCBI Taxonomy" id="9913"/>
    <lineage>
        <taxon>Eukaryota</taxon>
        <taxon>Metazoa</taxon>
        <taxon>Chordata</taxon>
        <taxon>Craniata</taxon>
        <taxon>Vertebrata</taxon>
        <taxon>Euteleostomi</taxon>
        <taxon>Mammalia</taxon>
        <taxon>Eutheria</taxon>
        <taxon>Laurasiatheria</taxon>
        <taxon>Artiodactyla</taxon>
        <taxon>Ruminantia</taxon>
        <taxon>Pecora</taxon>
        <taxon>Bovidae</taxon>
        <taxon>Bovinae</taxon>
        <taxon>Bos</taxon>
    </lineage>
</organism>